<gene>
    <name type="primary">STK32A</name>
    <name type="synonym">YANK1</name>
</gene>
<organism>
    <name type="scientific">Homo sapiens</name>
    <name type="common">Human</name>
    <dbReference type="NCBI Taxonomy" id="9606"/>
    <lineage>
        <taxon>Eukaryota</taxon>
        <taxon>Metazoa</taxon>
        <taxon>Chordata</taxon>
        <taxon>Craniata</taxon>
        <taxon>Vertebrata</taxon>
        <taxon>Euteleostomi</taxon>
        <taxon>Mammalia</taxon>
        <taxon>Eutheria</taxon>
        <taxon>Euarchontoglires</taxon>
        <taxon>Primates</taxon>
        <taxon>Haplorrhini</taxon>
        <taxon>Catarrhini</taxon>
        <taxon>Hominidae</taxon>
        <taxon>Homo</taxon>
    </lineage>
</organism>
<protein>
    <recommendedName>
        <fullName>Serine/threonine-protein kinase 32A</fullName>
        <ecNumber>2.7.11.1</ecNumber>
    </recommendedName>
    <alternativeName>
        <fullName>Yet another novel kinase 1</fullName>
    </alternativeName>
</protein>
<comment type="catalytic activity">
    <reaction evidence="1">
        <text>L-seryl-[protein] + ATP = O-phospho-L-seryl-[protein] + ADP + H(+)</text>
        <dbReference type="Rhea" id="RHEA:17989"/>
        <dbReference type="Rhea" id="RHEA-COMP:9863"/>
        <dbReference type="Rhea" id="RHEA-COMP:11604"/>
        <dbReference type="ChEBI" id="CHEBI:15378"/>
        <dbReference type="ChEBI" id="CHEBI:29999"/>
        <dbReference type="ChEBI" id="CHEBI:30616"/>
        <dbReference type="ChEBI" id="CHEBI:83421"/>
        <dbReference type="ChEBI" id="CHEBI:456216"/>
        <dbReference type="EC" id="2.7.11.1"/>
    </reaction>
</comment>
<comment type="catalytic activity">
    <reaction evidence="1">
        <text>L-threonyl-[protein] + ATP = O-phospho-L-threonyl-[protein] + ADP + H(+)</text>
        <dbReference type="Rhea" id="RHEA:46608"/>
        <dbReference type="Rhea" id="RHEA-COMP:11060"/>
        <dbReference type="Rhea" id="RHEA-COMP:11605"/>
        <dbReference type="ChEBI" id="CHEBI:15378"/>
        <dbReference type="ChEBI" id="CHEBI:30013"/>
        <dbReference type="ChEBI" id="CHEBI:30616"/>
        <dbReference type="ChEBI" id="CHEBI:61977"/>
        <dbReference type="ChEBI" id="CHEBI:456216"/>
        <dbReference type="EC" id="2.7.11.1"/>
    </reaction>
</comment>
<comment type="cofactor">
    <cofactor evidence="1">
        <name>Mg(2+)</name>
        <dbReference type="ChEBI" id="CHEBI:18420"/>
    </cofactor>
</comment>
<comment type="interaction">
    <interactant intactId="EBI-13046508">
        <id>Q8WU08-2</id>
    </interactant>
    <interactant intactId="EBI-295634">
        <id>Q16543</id>
        <label>CDC37</label>
    </interactant>
    <organismsDiffer>false</organismsDiffer>
    <experiments>3</experiments>
</comment>
<comment type="subcellular location">
    <subcellularLocation>
        <location>Cell membrane</location>
        <topology evidence="7">Lipid-anchor</topology>
    </subcellularLocation>
</comment>
<comment type="alternative products">
    <event type="alternative splicing"/>
    <isoform>
        <id>Q8WU08-1</id>
        <name evidence="10">1</name>
        <sequence type="displayed"/>
    </isoform>
    <isoform>
        <id>Q8WU08-2</id>
        <name evidence="5">2</name>
        <sequence type="described" ref="VSP_051992 VSP_051993"/>
    </isoform>
    <isoform>
        <id>Q8WU08-3</id>
        <name evidence="10">3</name>
        <sequence type="described" ref="VSP_051994 VSP_051995"/>
    </isoform>
</comment>
<comment type="similarity">
    <text evidence="2">Belongs to the protein kinase superfamily. Ser/Thr protein kinase family.</text>
</comment>
<reference evidence="10" key="1">
    <citation type="journal article" date="2002" name="Science">
        <title>The protein kinase complement of the human genome.</title>
        <authorList>
            <person name="Manning G."/>
            <person name="Whyte D.B."/>
            <person name="Martinez R."/>
            <person name="Hunter T."/>
            <person name="Sudarsanam S."/>
        </authorList>
    </citation>
    <scope>NUCLEOTIDE SEQUENCE [MRNA] (ISOFORM 1)</scope>
    <scope>NOMENCLATURE</scope>
</reference>
<reference evidence="10" key="2">
    <citation type="journal article" date="2004" name="Nat. Genet.">
        <title>Complete sequencing and characterization of 21,243 full-length human cDNAs.</title>
        <authorList>
            <person name="Ota T."/>
            <person name="Suzuki Y."/>
            <person name="Nishikawa T."/>
            <person name="Otsuki T."/>
            <person name="Sugiyama T."/>
            <person name="Irie R."/>
            <person name="Wakamatsu A."/>
            <person name="Hayashi K."/>
            <person name="Sato H."/>
            <person name="Nagai K."/>
            <person name="Kimura K."/>
            <person name="Makita H."/>
            <person name="Sekine M."/>
            <person name="Obayashi M."/>
            <person name="Nishi T."/>
            <person name="Shibahara T."/>
            <person name="Tanaka T."/>
            <person name="Ishii S."/>
            <person name="Yamamoto J."/>
            <person name="Saito K."/>
            <person name="Kawai Y."/>
            <person name="Isono Y."/>
            <person name="Nakamura Y."/>
            <person name="Nagahari K."/>
            <person name="Murakami K."/>
            <person name="Yasuda T."/>
            <person name="Iwayanagi T."/>
            <person name="Wagatsuma M."/>
            <person name="Shiratori A."/>
            <person name="Sudo H."/>
            <person name="Hosoiri T."/>
            <person name="Kaku Y."/>
            <person name="Kodaira H."/>
            <person name="Kondo H."/>
            <person name="Sugawara M."/>
            <person name="Takahashi M."/>
            <person name="Kanda K."/>
            <person name="Yokoi T."/>
            <person name="Furuya T."/>
            <person name="Kikkawa E."/>
            <person name="Omura Y."/>
            <person name="Abe K."/>
            <person name="Kamihara K."/>
            <person name="Katsuta N."/>
            <person name="Sato K."/>
            <person name="Tanikawa M."/>
            <person name="Yamazaki M."/>
            <person name="Ninomiya K."/>
            <person name="Ishibashi T."/>
            <person name="Yamashita H."/>
            <person name="Murakawa K."/>
            <person name="Fujimori K."/>
            <person name="Tanai H."/>
            <person name="Kimata M."/>
            <person name="Watanabe M."/>
            <person name="Hiraoka S."/>
            <person name="Chiba Y."/>
            <person name="Ishida S."/>
            <person name="Ono Y."/>
            <person name="Takiguchi S."/>
            <person name="Watanabe S."/>
            <person name="Yosida M."/>
            <person name="Hotuta T."/>
            <person name="Kusano J."/>
            <person name="Kanehori K."/>
            <person name="Takahashi-Fujii A."/>
            <person name="Hara H."/>
            <person name="Tanase T.-O."/>
            <person name="Nomura Y."/>
            <person name="Togiya S."/>
            <person name="Komai F."/>
            <person name="Hara R."/>
            <person name="Takeuchi K."/>
            <person name="Arita M."/>
            <person name="Imose N."/>
            <person name="Musashino K."/>
            <person name="Yuuki H."/>
            <person name="Oshima A."/>
            <person name="Sasaki N."/>
            <person name="Aotsuka S."/>
            <person name="Yoshikawa Y."/>
            <person name="Matsunawa H."/>
            <person name="Ichihara T."/>
            <person name="Shiohata N."/>
            <person name="Sano S."/>
            <person name="Moriya S."/>
            <person name="Momiyama H."/>
            <person name="Satoh N."/>
            <person name="Takami S."/>
            <person name="Terashima Y."/>
            <person name="Suzuki O."/>
            <person name="Nakagawa S."/>
            <person name="Senoh A."/>
            <person name="Mizoguchi H."/>
            <person name="Goto Y."/>
            <person name="Shimizu F."/>
            <person name="Wakebe H."/>
            <person name="Hishigaki H."/>
            <person name="Watanabe T."/>
            <person name="Sugiyama A."/>
            <person name="Takemoto M."/>
            <person name="Kawakami B."/>
            <person name="Yamazaki M."/>
            <person name="Watanabe K."/>
            <person name="Kumagai A."/>
            <person name="Itakura S."/>
            <person name="Fukuzumi Y."/>
            <person name="Fujimori Y."/>
            <person name="Komiyama M."/>
            <person name="Tashiro H."/>
            <person name="Tanigami A."/>
            <person name="Fujiwara T."/>
            <person name="Ono T."/>
            <person name="Yamada K."/>
            <person name="Fujii Y."/>
            <person name="Ozaki K."/>
            <person name="Hirao M."/>
            <person name="Ohmori Y."/>
            <person name="Kawabata A."/>
            <person name="Hikiji T."/>
            <person name="Kobatake N."/>
            <person name="Inagaki H."/>
            <person name="Ikema Y."/>
            <person name="Okamoto S."/>
            <person name="Okitani R."/>
            <person name="Kawakami T."/>
            <person name="Noguchi S."/>
            <person name="Itoh T."/>
            <person name="Shigeta K."/>
            <person name="Senba T."/>
            <person name="Matsumura K."/>
            <person name="Nakajima Y."/>
            <person name="Mizuno T."/>
            <person name="Morinaga M."/>
            <person name="Sasaki M."/>
            <person name="Togashi T."/>
            <person name="Oyama M."/>
            <person name="Hata H."/>
            <person name="Watanabe M."/>
            <person name="Komatsu T."/>
            <person name="Mizushima-Sugano J."/>
            <person name="Satoh T."/>
            <person name="Shirai Y."/>
            <person name="Takahashi Y."/>
            <person name="Nakagawa K."/>
            <person name="Okumura K."/>
            <person name="Nagase T."/>
            <person name="Nomura N."/>
            <person name="Kikuchi H."/>
            <person name="Masuho Y."/>
            <person name="Yamashita R."/>
            <person name="Nakai K."/>
            <person name="Yada T."/>
            <person name="Nakamura Y."/>
            <person name="Ohara O."/>
            <person name="Isogai T."/>
            <person name="Sugano S."/>
        </authorList>
    </citation>
    <scope>NUCLEOTIDE SEQUENCE [LARGE SCALE MRNA] (ISOFORM 3)</scope>
    <source>
        <tissue evidence="5">Amygdala</tissue>
    </source>
</reference>
<reference evidence="10" key="3">
    <citation type="journal article" date="2004" name="Nature">
        <title>The DNA sequence and comparative analysis of human chromosome 5.</title>
        <authorList>
            <person name="Schmutz J."/>
            <person name="Martin J."/>
            <person name="Terry A."/>
            <person name="Couronne O."/>
            <person name="Grimwood J."/>
            <person name="Lowry S."/>
            <person name="Gordon L.A."/>
            <person name="Scott D."/>
            <person name="Xie G."/>
            <person name="Huang W."/>
            <person name="Hellsten U."/>
            <person name="Tran-Gyamfi M."/>
            <person name="She X."/>
            <person name="Prabhakar S."/>
            <person name="Aerts A."/>
            <person name="Altherr M."/>
            <person name="Bajorek E."/>
            <person name="Black S."/>
            <person name="Branscomb E."/>
            <person name="Caoile C."/>
            <person name="Challacombe J.F."/>
            <person name="Chan Y.M."/>
            <person name="Denys M."/>
            <person name="Detter J.C."/>
            <person name="Escobar J."/>
            <person name="Flowers D."/>
            <person name="Fotopulos D."/>
            <person name="Glavina T."/>
            <person name="Gomez M."/>
            <person name="Gonzales E."/>
            <person name="Goodstein D."/>
            <person name="Grigoriev I."/>
            <person name="Groza M."/>
            <person name="Hammon N."/>
            <person name="Hawkins T."/>
            <person name="Haydu L."/>
            <person name="Israni S."/>
            <person name="Jett J."/>
            <person name="Kadner K."/>
            <person name="Kimball H."/>
            <person name="Kobayashi A."/>
            <person name="Lopez F."/>
            <person name="Lou Y."/>
            <person name="Martinez D."/>
            <person name="Medina C."/>
            <person name="Morgan J."/>
            <person name="Nandkeshwar R."/>
            <person name="Noonan J.P."/>
            <person name="Pitluck S."/>
            <person name="Pollard M."/>
            <person name="Predki P."/>
            <person name="Priest J."/>
            <person name="Ramirez L."/>
            <person name="Retterer J."/>
            <person name="Rodriguez A."/>
            <person name="Rogers S."/>
            <person name="Salamov A."/>
            <person name="Salazar A."/>
            <person name="Thayer N."/>
            <person name="Tice H."/>
            <person name="Tsai M."/>
            <person name="Ustaszewska A."/>
            <person name="Vo N."/>
            <person name="Wheeler J."/>
            <person name="Wu K."/>
            <person name="Yang J."/>
            <person name="Dickson M."/>
            <person name="Cheng J.-F."/>
            <person name="Eichler E.E."/>
            <person name="Olsen A."/>
            <person name="Pennacchio L.A."/>
            <person name="Rokhsar D.S."/>
            <person name="Richardson P."/>
            <person name="Lucas S.M."/>
            <person name="Myers R.M."/>
            <person name="Rubin E.M."/>
        </authorList>
    </citation>
    <scope>NUCLEOTIDE SEQUENCE [LARGE SCALE GENOMIC DNA]</scope>
</reference>
<reference evidence="10" key="4">
    <citation type="journal article" date="2004" name="Genome Res.">
        <title>The status, quality, and expansion of the NIH full-length cDNA project: the Mammalian Gene Collection (MGC).</title>
        <authorList>
            <consortium name="The MGC Project Team"/>
        </authorList>
    </citation>
    <scope>NUCLEOTIDE SEQUENCE [LARGE SCALE MRNA] (ISOFORM 2)</scope>
    <source>
        <tissue>Urinary bladder</tissue>
    </source>
</reference>
<reference key="5">
    <citation type="journal article" date="2014" name="Anal. Biochem.">
        <title>Cell-free identification of novel N-myristoylated proteins from complementary DNA resources using bioorthogonal myristic acid analogues.</title>
        <authorList>
            <person name="Takamitsu E."/>
            <person name="Fukunaga K."/>
            <person name="Iio Y."/>
            <person name="Moriya K."/>
            <person name="Utsumi T."/>
        </authorList>
    </citation>
    <scope>MYRISTOYLATION AT GLY-2</scope>
    <scope>SUBCELLULAR LOCATION</scope>
    <scope>MUTAGENESIS OF GLY-2</scope>
</reference>
<reference key="6">
    <citation type="journal article" date="2007" name="Nature">
        <title>Patterns of somatic mutation in human cancer genomes.</title>
        <authorList>
            <person name="Greenman C."/>
            <person name="Stephens P."/>
            <person name="Smith R."/>
            <person name="Dalgliesh G.L."/>
            <person name="Hunter C."/>
            <person name="Bignell G."/>
            <person name="Davies H."/>
            <person name="Teague J."/>
            <person name="Butler A."/>
            <person name="Stevens C."/>
            <person name="Edkins S."/>
            <person name="O'Meara S."/>
            <person name="Vastrik I."/>
            <person name="Schmidt E.E."/>
            <person name="Avis T."/>
            <person name="Barthorpe S."/>
            <person name="Bhamra G."/>
            <person name="Buck G."/>
            <person name="Choudhury B."/>
            <person name="Clements J."/>
            <person name="Cole J."/>
            <person name="Dicks E."/>
            <person name="Forbes S."/>
            <person name="Gray K."/>
            <person name="Halliday K."/>
            <person name="Harrison R."/>
            <person name="Hills K."/>
            <person name="Hinton J."/>
            <person name="Jenkinson A."/>
            <person name="Jones D."/>
            <person name="Menzies A."/>
            <person name="Mironenko T."/>
            <person name="Perry J."/>
            <person name="Raine K."/>
            <person name="Richardson D."/>
            <person name="Shepherd R."/>
            <person name="Small A."/>
            <person name="Tofts C."/>
            <person name="Varian J."/>
            <person name="Webb T."/>
            <person name="West S."/>
            <person name="Widaa S."/>
            <person name="Yates A."/>
            <person name="Cahill D.P."/>
            <person name="Louis D.N."/>
            <person name="Goldstraw P."/>
            <person name="Nicholson A.G."/>
            <person name="Brasseur F."/>
            <person name="Looijenga L."/>
            <person name="Weber B.L."/>
            <person name="Chiew Y.-E."/>
            <person name="DeFazio A."/>
            <person name="Greaves M.F."/>
            <person name="Green A.R."/>
            <person name="Campbell P."/>
            <person name="Birney E."/>
            <person name="Easton D.F."/>
            <person name="Chenevix-Trench G."/>
            <person name="Tan M.-H."/>
            <person name="Khoo S.K."/>
            <person name="Teh B.T."/>
            <person name="Yuen S.T."/>
            <person name="Leung S.Y."/>
            <person name="Wooster R."/>
            <person name="Futreal P.A."/>
            <person name="Stratton M.R."/>
        </authorList>
    </citation>
    <scope>VARIANTS [LARGE SCALE ANALYSIS] MET-58; PHE-89 AND ILE-316</scope>
</reference>
<proteinExistence type="evidence at protein level"/>
<dbReference type="EC" id="2.7.11.1"/>
<dbReference type="EMBL" id="AK094580">
    <property type="protein sequence ID" value="BAG52892.1"/>
    <property type="molecule type" value="mRNA"/>
</dbReference>
<dbReference type="EMBL" id="AC008740">
    <property type="status" value="NOT_ANNOTATED_CDS"/>
    <property type="molecule type" value="Genomic_DNA"/>
</dbReference>
<dbReference type="EMBL" id="CH471062">
    <property type="protein sequence ID" value="EAW61827.1"/>
    <property type="molecule type" value="Genomic_DNA"/>
</dbReference>
<dbReference type="CCDS" id="CCDS47299.1">
    <molecule id="Q8WU08-1"/>
</dbReference>
<dbReference type="CCDS" id="CCDS54931.1">
    <molecule id="Q8WU08-2"/>
</dbReference>
<dbReference type="RefSeq" id="NP_001106195.1">
    <molecule id="Q8WU08-1"/>
    <property type="nucleotide sequence ID" value="NM_001112724.2"/>
</dbReference>
<dbReference type="RefSeq" id="NP_659438.1">
    <molecule id="Q8WU08-2"/>
    <property type="nucleotide sequence ID" value="NM_145001.4"/>
</dbReference>
<dbReference type="PDB" id="4FR4">
    <property type="method" value="X-ray"/>
    <property type="resolution" value="2.29 A"/>
    <property type="chains" value="A/B/C/D/E/F=9-390"/>
</dbReference>
<dbReference type="PDBsum" id="4FR4"/>
<dbReference type="SMR" id="Q8WU08"/>
<dbReference type="BioGRID" id="128429">
    <property type="interactions" value="20"/>
</dbReference>
<dbReference type="FunCoup" id="Q8WU08">
    <property type="interactions" value="730"/>
</dbReference>
<dbReference type="IntAct" id="Q8WU08">
    <property type="interactions" value="15"/>
</dbReference>
<dbReference type="STRING" id="9606.ENSP00000381535"/>
<dbReference type="BindingDB" id="Q8WU08"/>
<dbReference type="ChEMBL" id="CHEMBL6150"/>
<dbReference type="DrugBank" id="DB12010">
    <property type="generic name" value="Fostamatinib"/>
</dbReference>
<dbReference type="DrugCentral" id="Q8WU08"/>
<dbReference type="iPTMnet" id="Q8WU08"/>
<dbReference type="PhosphoSitePlus" id="Q8WU08"/>
<dbReference type="BioMuta" id="STK32A"/>
<dbReference type="DMDM" id="93140693"/>
<dbReference type="jPOST" id="Q8WU08"/>
<dbReference type="MassIVE" id="Q8WU08"/>
<dbReference type="PaxDb" id="9606-ENSP00000381535"/>
<dbReference type="PeptideAtlas" id="Q8WU08"/>
<dbReference type="ProteomicsDB" id="74618">
    <molecule id="Q8WU08-1"/>
</dbReference>
<dbReference type="ProteomicsDB" id="74620">
    <molecule id="Q8WU08-3"/>
</dbReference>
<dbReference type="Antibodypedia" id="27607">
    <property type="antibodies" value="230 antibodies from 27 providers"/>
</dbReference>
<dbReference type="DNASU" id="202374"/>
<dbReference type="Ensembl" id="ENST00000397936.8">
    <molecule id="Q8WU08-1"/>
    <property type="protein sequence ID" value="ENSP00000381030.3"/>
    <property type="gene ID" value="ENSG00000169302.16"/>
</dbReference>
<dbReference type="Ensembl" id="ENST00000626951.2">
    <molecule id="Q8WU08-2"/>
    <property type="protein sequence ID" value="ENSP00000487441.1"/>
    <property type="gene ID" value="ENSG00000169302.16"/>
</dbReference>
<dbReference type="GeneID" id="202374"/>
<dbReference type="KEGG" id="hsa:202374"/>
<dbReference type="MANE-Select" id="ENST00000397936.8">
    <property type="protein sequence ID" value="ENSP00000381030.3"/>
    <property type="RefSeq nucleotide sequence ID" value="NM_001112724.2"/>
    <property type="RefSeq protein sequence ID" value="NP_001106195.1"/>
</dbReference>
<dbReference type="UCSC" id="uc010jgn.2">
    <molecule id="Q8WU08-1"/>
    <property type="organism name" value="human"/>
</dbReference>
<dbReference type="AGR" id="HGNC:28317"/>
<dbReference type="CTD" id="202374"/>
<dbReference type="DisGeNET" id="202374"/>
<dbReference type="GeneCards" id="STK32A"/>
<dbReference type="HGNC" id="HGNC:28317">
    <property type="gene designation" value="STK32A"/>
</dbReference>
<dbReference type="HPA" id="ENSG00000169302">
    <property type="expression patterns" value="Tissue enhanced (adrenal gland, brain)"/>
</dbReference>
<dbReference type="neXtProt" id="NX_Q8WU08"/>
<dbReference type="OpenTargets" id="ENSG00000169302"/>
<dbReference type="PharmGKB" id="PA134932545"/>
<dbReference type="VEuPathDB" id="HostDB:ENSG00000169302"/>
<dbReference type="eggNOG" id="KOG0598">
    <property type="taxonomic scope" value="Eukaryota"/>
</dbReference>
<dbReference type="GeneTree" id="ENSGT00940000158185"/>
<dbReference type="HOGENOM" id="CLU_000288_63_5_1"/>
<dbReference type="InParanoid" id="Q8WU08"/>
<dbReference type="OMA" id="MRITTMA"/>
<dbReference type="OrthoDB" id="354826at2759"/>
<dbReference type="PAN-GO" id="Q8WU08">
    <property type="GO annotations" value="3 GO annotations based on evolutionary models"/>
</dbReference>
<dbReference type="PhylomeDB" id="Q8WU08"/>
<dbReference type="TreeFam" id="TF313395"/>
<dbReference type="PathwayCommons" id="Q8WU08"/>
<dbReference type="SignaLink" id="Q8WU08"/>
<dbReference type="BioGRID-ORCS" id="202374">
    <property type="hits" value="12 hits in 1181 CRISPR screens"/>
</dbReference>
<dbReference type="ChiTaRS" id="STK32A">
    <property type="organism name" value="human"/>
</dbReference>
<dbReference type="EvolutionaryTrace" id="Q8WU08"/>
<dbReference type="GenomeRNAi" id="202374"/>
<dbReference type="Pharos" id="Q8WU08">
    <property type="development level" value="Tchem"/>
</dbReference>
<dbReference type="PRO" id="PR:Q8WU08"/>
<dbReference type="Proteomes" id="UP000005640">
    <property type="component" value="Chromosome 5"/>
</dbReference>
<dbReference type="RNAct" id="Q8WU08">
    <property type="molecule type" value="protein"/>
</dbReference>
<dbReference type="Bgee" id="ENSG00000169302">
    <property type="expression patterns" value="Expressed in sural nerve and 124 other cell types or tissues"/>
</dbReference>
<dbReference type="ExpressionAtlas" id="Q8WU08">
    <property type="expression patterns" value="baseline and differential"/>
</dbReference>
<dbReference type="GO" id="GO:0005886">
    <property type="term" value="C:plasma membrane"/>
    <property type="evidence" value="ECO:0007669"/>
    <property type="project" value="UniProtKB-SubCell"/>
</dbReference>
<dbReference type="GO" id="GO:0005524">
    <property type="term" value="F:ATP binding"/>
    <property type="evidence" value="ECO:0007669"/>
    <property type="project" value="UniProtKB-KW"/>
</dbReference>
<dbReference type="GO" id="GO:0046872">
    <property type="term" value="F:metal ion binding"/>
    <property type="evidence" value="ECO:0007669"/>
    <property type="project" value="UniProtKB-KW"/>
</dbReference>
<dbReference type="GO" id="GO:0106310">
    <property type="term" value="F:protein serine kinase activity"/>
    <property type="evidence" value="ECO:0007669"/>
    <property type="project" value="RHEA"/>
</dbReference>
<dbReference type="GO" id="GO:0004674">
    <property type="term" value="F:protein serine/threonine kinase activity"/>
    <property type="evidence" value="ECO:0000318"/>
    <property type="project" value="GO_Central"/>
</dbReference>
<dbReference type="GO" id="GO:0035556">
    <property type="term" value="P:intracellular signal transduction"/>
    <property type="evidence" value="ECO:0000318"/>
    <property type="project" value="GO_Central"/>
</dbReference>
<dbReference type="CDD" id="cd05578">
    <property type="entry name" value="STKc_Yank1"/>
    <property type="match status" value="1"/>
</dbReference>
<dbReference type="FunFam" id="1.10.510.10:FF:000169">
    <property type="entry name" value="Serine/threonine-protein kinase 32A"/>
    <property type="match status" value="1"/>
</dbReference>
<dbReference type="FunFam" id="3.30.200.20:FF:000158">
    <property type="entry name" value="Serine/threonine-protein kinase 32A"/>
    <property type="match status" value="1"/>
</dbReference>
<dbReference type="FunFam" id="3.30.200.20:FF:000160">
    <property type="entry name" value="Serine/threonine-protein kinase 32C"/>
    <property type="match status" value="1"/>
</dbReference>
<dbReference type="Gene3D" id="3.30.200.20">
    <property type="entry name" value="Phosphorylase Kinase, domain 1"/>
    <property type="match status" value="2"/>
</dbReference>
<dbReference type="Gene3D" id="1.10.510.10">
    <property type="entry name" value="Transferase(Phosphotransferase) domain 1"/>
    <property type="match status" value="1"/>
</dbReference>
<dbReference type="InterPro" id="IPR011009">
    <property type="entry name" value="Kinase-like_dom_sf"/>
</dbReference>
<dbReference type="InterPro" id="IPR000719">
    <property type="entry name" value="Prot_kinase_dom"/>
</dbReference>
<dbReference type="InterPro" id="IPR017441">
    <property type="entry name" value="Protein_kinase_ATP_BS"/>
</dbReference>
<dbReference type="InterPro" id="IPR008271">
    <property type="entry name" value="Ser/Thr_kinase_AS"/>
</dbReference>
<dbReference type="PANTHER" id="PTHR24355">
    <property type="entry name" value="G PROTEIN-COUPLED RECEPTOR KINASE/RIBOSOMAL PROTEIN S6 KINASE"/>
    <property type="match status" value="1"/>
</dbReference>
<dbReference type="PANTHER" id="PTHR24355:SF31">
    <property type="entry name" value="SERINE_THREONINE KINASE 32A"/>
    <property type="match status" value="1"/>
</dbReference>
<dbReference type="Pfam" id="PF00069">
    <property type="entry name" value="Pkinase"/>
    <property type="match status" value="1"/>
</dbReference>
<dbReference type="SMART" id="SM00220">
    <property type="entry name" value="S_TKc"/>
    <property type="match status" value="1"/>
</dbReference>
<dbReference type="SUPFAM" id="SSF56112">
    <property type="entry name" value="Protein kinase-like (PK-like)"/>
    <property type="match status" value="1"/>
</dbReference>
<dbReference type="PROSITE" id="PS00107">
    <property type="entry name" value="PROTEIN_KINASE_ATP"/>
    <property type="match status" value="1"/>
</dbReference>
<dbReference type="PROSITE" id="PS50011">
    <property type="entry name" value="PROTEIN_KINASE_DOM"/>
    <property type="match status" value="1"/>
</dbReference>
<dbReference type="PROSITE" id="PS00108">
    <property type="entry name" value="PROTEIN_KINASE_ST"/>
    <property type="match status" value="1"/>
</dbReference>
<keyword id="KW-0002">3D-structure</keyword>
<keyword id="KW-0025">Alternative splicing</keyword>
<keyword id="KW-0067">ATP-binding</keyword>
<keyword id="KW-1003">Cell membrane</keyword>
<keyword id="KW-0418">Kinase</keyword>
<keyword id="KW-0449">Lipoprotein</keyword>
<keyword id="KW-0460">Magnesium</keyword>
<keyword id="KW-0472">Membrane</keyword>
<keyword id="KW-0479">Metal-binding</keyword>
<keyword id="KW-0519">Myristate</keyword>
<keyword id="KW-0547">Nucleotide-binding</keyword>
<keyword id="KW-1267">Proteomics identification</keyword>
<keyword id="KW-1185">Reference proteome</keyword>
<keyword id="KW-0723">Serine/threonine-protein kinase</keyword>
<keyword id="KW-0808">Transferase</keyword>
<accession>Q8WU08</accession>
<accession>B3KSY0</accession>
<evidence type="ECO:0000250" key="1">
    <source>
        <dbReference type="UniProtKB" id="Q60592"/>
    </source>
</evidence>
<evidence type="ECO:0000255" key="2">
    <source>
        <dbReference type="PROSITE-ProRule" id="PRU00159"/>
    </source>
</evidence>
<evidence type="ECO:0000255" key="3">
    <source>
        <dbReference type="PROSITE-ProRule" id="PRU10027"/>
    </source>
</evidence>
<evidence type="ECO:0000256" key="4">
    <source>
        <dbReference type="SAM" id="MobiDB-lite"/>
    </source>
</evidence>
<evidence type="ECO:0000269" key="5">
    <source>
    </source>
</evidence>
<evidence type="ECO:0000269" key="6">
    <source>
    </source>
</evidence>
<evidence type="ECO:0000269" key="7">
    <source>
    </source>
</evidence>
<evidence type="ECO:0000303" key="8">
    <source>
    </source>
</evidence>
<evidence type="ECO:0000303" key="9">
    <source>
    </source>
</evidence>
<evidence type="ECO:0000305" key="10"/>
<evidence type="ECO:0007829" key="11">
    <source>
        <dbReference type="PDB" id="4FR4"/>
    </source>
</evidence>
<sequence>MGANTSRKPPVFDENEDVNFDHFEILRAIGKGSFGKVCIVQKNDTKKMYAMKYMNKQKCVERNEVRNVFKELQIMQGLEHPFLVNLWYSFQDEEDMFMVVDLLLGGDLRYHLQQNVHFKEETVKLFICELVMALDYLQNQRIIHRDMKPDNILLDEHGHVHITDFNIAAMLPRETQITTMAGTKPYMAPEMFSSRKGAGYSFAVDWWSLGVTAYELLRGRRPYHIRSSTSSKEIVHTFETTVVTYPSAWSQEMVSLLKKLLEPNPDQRFSQLSDVQNFPYMNDINWDAVFQKRLIPGFIPNKGRLNCDPTFELEEMILESKPLHKKKKRLAKKEKDMRKCDSSQTCLLQEHLDSVQKEFIIFNREKVNRDFNKRQPNLALEQTKDPQGEDGQNNNL</sequence>
<name>ST32A_HUMAN</name>
<feature type="initiator methionine" description="Removed" evidence="7">
    <location>
        <position position="1"/>
    </location>
</feature>
<feature type="chain" id="PRO_0000232411" description="Serine/threonine-protein kinase 32A">
    <location>
        <begin position="2"/>
        <end position="396"/>
    </location>
</feature>
<feature type="domain" description="Protein kinase" evidence="2">
    <location>
        <begin position="23"/>
        <end position="281"/>
    </location>
</feature>
<feature type="region of interest" description="Disordered" evidence="4">
    <location>
        <begin position="373"/>
        <end position="396"/>
    </location>
</feature>
<feature type="active site" description="Proton acceptor" evidence="1 2 3">
    <location>
        <position position="146"/>
    </location>
</feature>
<feature type="binding site" evidence="1 2">
    <location>
        <begin position="29"/>
        <end position="37"/>
    </location>
    <ligand>
        <name>ATP</name>
        <dbReference type="ChEBI" id="CHEBI:30616"/>
    </ligand>
</feature>
<feature type="binding site" evidence="1 2">
    <location>
        <position position="52"/>
    </location>
    <ligand>
        <name>ATP</name>
        <dbReference type="ChEBI" id="CHEBI:30616"/>
    </ligand>
</feature>
<feature type="lipid moiety-binding region" description="N-myristoyl glycine" evidence="7">
    <location>
        <position position="2"/>
    </location>
</feature>
<feature type="splice variant" id="VSP_051992" description="In isoform 2." evidence="9">
    <original>GHVHITDFN</original>
    <variation>DTWLSYKSH</variation>
    <location>
        <begin position="158"/>
        <end position="166"/>
    </location>
</feature>
<feature type="splice variant" id="VSP_051993" description="In isoform 2." evidence="9">
    <location>
        <begin position="167"/>
        <end position="396"/>
    </location>
</feature>
<feature type="splice variant" id="VSP_051994" description="In isoform 3." evidence="8">
    <original>TCLLQEHLDSVQKE</original>
    <variation>VSRSPPNSGSWVSP</variation>
    <location>
        <begin position="345"/>
        <end position="358"/>
    </location>
</feature>
<feature type="splice variant" id="VSP_051995" description="In isoform 3." evidence="8">
    <location>
        <begin position="359"/>
        <end position="396"/>
    </location>
</feature>
<feature type="sequence variant" id="VAR_041163" description="In dbSNP:rs35852718." evidence="6">
    <original>K</original>
    <variation>M</variation>
    <location>
        <position position="58"/>
    </location>
</feature>
<feature type="sequence variant" id="VAR_041164" description="In a metastatic melanoma sample; somatic mutation." evidence="6">
    <original>S</original>
    <variation>F</variation>
    <location>
        <position position="89"/>
    </location>
</feature>
<feature type="sequence variant" id="VAR_041165" description="In a lung neuroendocrine carcinoma sample; somatic mutation." evidence="6">
    <original>M</original>
    <variation>I</variation>
    <location>
        <position position="316"/>
    </location>
</feature>
<feature type="mutagenesis site" description="Localizes to cytoplasm." evidence="7">
    <original>G</original>
    <variation>A</variation>
    <location>
        <position position="2"/>
    </location>
</feature>
<feature type="helix" evidence="11">
    <location>
        <begin position="20"/>
        <end position="22"/>
    </location>
</feature>
<feature type="strand" evidence="11">
    <location>
        <begin position="23"/>
        <end position="30"/>
    </location>
</feature>
<feature type="strand" evidence="11">
    <location>
        <begin position="37"/>
        <end position="42"/>
    </location>
</feature>
<feature type="turn" evidence="11">
    <location>
        <begin position="43"/>
        <end position="45"/>
    </location>
</feature>
<feature type="strand" evidence="11">
    <location>
        <begin position="48"/>
        <end position="55"/>
    </location>
</feature>
<feature type="helix" evidence="11">
    <location>
        <begin position="56"/>
        <end position="61"/>
    </location>
</feature>
<feature type="helix" evidence="11">
    <location>
        <begin position="65"/>
        <end position="76"/>
    </location>
</feature>
<feature type="strand" evidence="11">
    <location>
        <begin position="86"/>
        <end position="91"/>
    </location>
</feature>
<feature type="strand" evidence="11">
    <location>
        <begin position="93"/>
        <end position="100"/>
    </location>
</feature>
<feature type="helix" evidence="11">
    <location>
        <begin position="108"/>
        <end position="113"/>
    </location>
</feature>
<feature type="helix" evidence="11">
    <location>
        <begin position="120"/>
        <end position="139"/>
    </location>
</feature>
<feature type="strand" evidence="11">
    <location>
        <begin position="151"/>
        <end position="154"/>
    </location>
</feature>
<feature type="strand" evidence="11">
    <location>
        <begin position="160"/>
        <end position="162"/>
    </location>
</feature>
<feature type="helix" evidence="11">
    <location>
        <begin position="184"/>
        <end position="186"/>
    </location>
</feature>
<feature type="helix" evidence="11">
    <location>
        <begin position="189"/>
        <end position="191"/>
    </location>
</feature>
<feature type="helix" evidence="11">
    <location>
        <begin position="204"/>
        <end position="218"/>
    </location>
</feature>
<feature type="helix" evidence="11">
    <location>
        <begin position="231"/>
        <end position="240"/>
    </location>
</feature>
<feature type="helix" evidence="11">
    <location>
        <begin position="251"/>
        <end position="260"/>
    </location>
</feature>
<feature type="helix" evidence="11">
    <location>
        <begin position="265"/>
        <end position="267"/>
    </location>
</feature>
<feature type="helix" evidence="11">
    <location>
        <begin position="272"/>
        <end position="276"/>
    </location>
</feature>
<feature type="helix" evidence="11">
    <location>
        <begin position="279"/>
        <end position="281"/>
    </location>
</feature>
<feature type="helix" evidence="11">
    <location>
        <begin position="286"/>
        <end position="290"/>
    </location>
</feature>
<feature type="helix" evidence="11">
    <location>
        <begin position="343"/>
        <end position="358"/>
    </location>
</feature>
<feature type="helix" evidence="11">
    <location>
        <begin position="364"/>
        <end position="369"/>
    </location>
</feature>